<organism>
    <name type="scientific">Enterobacter sp. (strain 638)</name>
    <dbReference type="NCBI Taxonomy" id="399742"/>
    <lineage>
        <taxon>Bacteria</taxon>
        <taxon>Pseudomonadati</taxon>
        <taxon>Pseudomonadota</taxon>
        <taxon>Gammaproteobacteria</taxon>
        <taxon>Enterobacterales</taxon>
        <taxon>Enterobacteriaceae</taxon>
        <taxon>Enterobacter</taxon>
    </lineage>
</organism>
<gene>
    <name evidence="1" type="primary">ilvC</name>
    <name type="ordered locus">Ent638_4009</name>
</gene>
<sequence length="491" mass="54013">MANYFNTLNLRQQLAQLGKCRFMARDEFADGASYLQGKKVVIVGCGAQGLNQGLNMRDSGLDISYALRKEAIAEKRASWRKATENGFKVGTYEELVPQADLVVNLTPDKQHSDVVRSVQPLMKDGAALGYSHGFNIVEVGEQIRKDITVVMVAPKCPGTEVREEYKRGFGVPTLIAVHPENDPKGEGMAIAKAWAAATGGHRAGVLESSFVAEVKSDLMGEQTILCGMLQAGSLLCFDKLVEEGTDPAYAEKLIQFGWETITEALKQGGITLMMDRLSNPAKLRAYALSEQLKEIMAPLFQKHMDDIISGEFSSGMMSDWANDDKNLLTWREETGKTAFETASQFDGKISEQEYFDKGVLMIAMVKAGVELAFETMVDSGIIEESAYYESLHELPLIANTIARKRLYEMNVVISDTAEYGNYLFSYACVPLLKEFMTTLQTGDLGKAVAEGAVDNAQLRDVNEAIRSHAIESVGHTLRGYMKDMKRIAVAG</sequence>
<proteinExistence type="inferred from homology"/>
<accession>A4WG34</accession>
<dbReference type="EC" id="1.1.1.86" evidence="1"/>
<dbReference type="EMBL" id="CP000653">
    <property type="protein sequence ID" value="ABP62664.1"/>
    <property type="molecule type" value="Genomic_DNA"/>
</dbReference>
<dbReference type="RefSeq" id="WP_015960968.1">
    <property type="nucleotide sequence ID" value="NC_009436.1"/>
</dbReference>
<dbReference type="SMR" id="A4WG34"/>
<dbReference type="STRING" id="399742.Ent638_4009"/>
<dbReference type="KEGG" id="ent:Ent638_4009"/>
<dbReference type="eggNOG" id="COG0059">
    <property type="taxonomic scope" value="Bacteria"/>
</dbReference>
<dbReference type="HOGENOM" id="CLU_551905_0_0_6"/>
<dbReference type="OrthoDB" id="9804088at2"/>
<dbReference type="UniPathway" id="UPA00047">
    <property type="reaction ID" value="UER00056"/>
</dbReference>
<dbReference type="UniPathway" id="UPA00049">
    <property type="reaction ID" value="UER00060"/>
</dbReference>
<dbReference type="Proteomes" id="UP000000230">
    <property type="component" value="Chromosome"/>
</dbReference>
<dbReference type="GO" id="GO:0005829">
    <property type="term" value="C:cytosol"/>
    <property type="evidence" value="ECO:0007669"/>
    <property type="project" value="TreeGrafter"/>
</dbReference>
<dbReference type="GO" id="GO:0004455">
    <property type="term" value="F:ketol-acid reductoisomerase activity"/>
    <property type="evidence" value="ECO:0007669"/>
    <property type="project" value="UniProtKB-UniRule"/>
</dbReference>
<dbReference type="GO" id="GO:0000287">
    <property type="term" value="F:magnesium ion binding"/>
    <property type="evidence" value="ECO:0007669"/>
    <property type="project" value="UniProtKB-UniRule"/>
</dbReference>
<dbReference type="GO" id="GO:0009097">
    <property type="term" value="P:isoleucine biosynthetic process"/>
    <property type="evidence" value="ECO:0007669"/>
    <property type="project" value="UniProtKB-UniRule"/>
</dbReference>
<dbReference type="GO" id="GO:0009099">
    <property type="term" value="P:L-valine biosynthetic process"/>
    <property type="evidence" value="ECO:0007669"/>
    <property type="project" value="UniProtKB-UniRule"/>
</dbReference>
<dbReference type="FunFam" id="1.10.1040.10:FF:000007">
    <property type="entry name" value="Ketol-acid reductoisomerase (NADP(+))"/>
    <property type="match status" value="1"/>
</dbReference>
<dbReference type="FunFam" id="3.40.50.720:FF:000043">
    <property type="entry name" value="Ketol-acid reductoisomerase (NADP(+))"/>
    <property type="match status" value="1"/>
</dbReference>
<dbReference type="Gene3D" id="1.10.1040.10">
    <property type="entry name" value="N-(1-d-carboxylethyl)-l-norvaline Dehydrogenase, domain 2"/>
    <property type="match status" value="1"/>
</dbReference>
<dbReference type="Gene3D" id="3.40.50.720">
    <property type="entry name" value="NAD(P)-binding Rossmann-like Domain"/>
    <property type="match status" value="1"/>
</dbReference>
<dbReference type="HAMAP" id="MF_00435">
    <property type="entry name" value="IlvC"/>
    <property type="match status" value="1"/>
</dbReference>
<dbReference type="InterPro" id="IPR008927">
    <property type="entry name" value="6-PGluconate_DH-like_C_sf"/>
</dbReference>
<dbReference type="InterPro" id="IPR013328">
    <property type="entry name" value="6PGD_dom2"/>
</dbReference>
<dbReference type="InterPro" id="IPR013023">
    <property type="entry name" value="KARI"/>
</dbReference>
<dbReference type="InterPro" id="IPR000506">
    <property type="entry name" value="KARI_C"/>
</dbReference>
<dbReference type="InterPro" id="IPR013116">
    <property type="entry name" value="KARI_N"/>
</dbReference>
<dbReference type="InterPro" id="IPR036291">
    <property type="entry name" value="NAD(P)-bd_dom_sf"/>
</dbReference>
<dbReference type="NCBIfam" id="TIGR00465">
    <property type="entry name" value="ilvC"/>
    <property type="match status" value="1"/>
</dbReference>
<dbReference type="NCBIfam" id="NF003557">
    <property type="entry name" value="PRK05225.1"/>
    <property type="match status" value="1"/>
</dbReference>
<dbReference type="PANTHER" id="PTHR21371">
    <property type="entry name" value="KETOL-ACID REDUCTOISOMERASE, MITOCHONDRIAL"/>
    <property type="match status" value="1"/>
</dbReference>
<dbReference type="PANTHER" id="PTHR21371:SF1">
    <property type="entry name" value="KETOL-ACID REDUCTOISOMERASE, MITOCHONDRIAL"/>
    <property type="match status" value="1"/>
</dbReference>
<dbReference type="Pfam" id="PF01450">
    <property type="entry name" value="KARI_C"/>
    <property type="match status" value="2"/>
</dbReference>
<dbReference type="Pfam" id="PF07991">
    <property type="entry name" value="KARI_N"/>
    <property type="match status" value="1"/>
</dbReference>
<dbReference type="SUPFAM" id="SSF48179">
    <property type="entry name" value="6-phosphogluconate dehydrogenase C-terminal domain-like"/>
    <property type="match status" value="2"/>
</dbReference>
<dbReference type="SUPFAM" id="SSF51735">
    <property type="entry name" value="NAD(P)-binding Rossmann-fold domains"/>
    <property type="match status" value="1"/>
</dbReference>
<dbReference type="PROSITE" id="PS51851">
    <property type="entry name" value="KARI_C"/>
    <property type="match status" value="2"/>
</dbReference>
<dbReference type="PROSITE" id="PS51850">
    <property type="entry name" value="KARI_N"/>
    <property type="match status" value="1"/>
</dbReference>
<keyword id="KW-0028">Amino-acid biosynthesis</keyword>
<keyword id="KW-0100">Branched-chain amino acid biosynthesis</keyword>
<keyword id="KW-0460">Magnesium</keyword>
<keyword id="KW-0479">Metal-binding</keyword>
<keyword id="KW-0521">NADP</keyword>
<keyword id="KW-0560">Oxidoreductase</keyword>
<keyword id="KW-0677">Repeat</keyword>
<name>ILVC_ENT38</name>
<comment type="function">
    <text evidence="1">Involved in the biosynthesis of branched-chain amino acids (BCAA). Catalyzes an alkyl-migration followed by a ketol-acid reduction of (S)-2-acetolactate (S2AL) to yield (R)-2,3-dihydroxy-isovalerate. In the isomerase reaction, S2AL is rearranged via a Mg-dependent methyl migration to produce 3-hydroxy-3-methyl-2-ketobutyrate (HMKB). In the reductase reaction, this 2-ketoacid undergoes a metal-dependent reduction by NADPH to yield (R)-2,3-dihydroxy-isovalerate.</text>
</comment>
<comment type="catalytic activity">
    <reaction evidence="1">
        <text>(2R)-2,3-dihydroxy-3-methylbutanoate + NADP(+) = (2S)-2-acetolactate + NADPH + H(+)</text>
        <dbReference type="Rhea" id="RHEA:22068"/>
        <dbReference type="ChEBI" id="CHEBI:15378"/>
        <dbReference type="ChEBI" id="CHEBI:49072"/>
        <dbReference type="ChEBI" id="CHEBI:57783"/>
        <dbReference type="ChEBI" id="CHEBI:58349"/>
        <dbReference type="ChEBI" id="CHEBI:58476"/>
        <dbReference type="EC" id="1.1.1.86"/>
    </reaction>
</comment>
<comment type="catalytic activity">
    <reaction evidence="1">
        <text>(2R,3R)-2,3-dihydroxy-3-methylpentanoate + NADP(+) = (S)-2-ethyl-2-hydroxy-3-oxobutanoate + NADPH + H(+)</text>
        <dbReference type="Rhea" id="RHEA:13493"/>
        <dbReference type="ChEBI" id="CHEBI:15378"/>
        <dbReference type="ChEBI" id="CHEBI:49256"/>
        <dbReference type="ChEBI" id="CHEBI:49258"/>
        <dbReference type="ChEBI" id="CHEBI:57783"/>
        <dbReference type="ChEBI" id="CHEBI:58349"/>
        <dbReference type="EC" id="1.1.1.86"/>
    </reaction>
</comment>
<comment type="cofactor">
    <cofactor evidence="1">
        <name>Mg(2+)</name>
        <dbReference type="ChEBI" id="CHEBI:18420"/>
    </cofactor>
    <text evidence="1">Binds 2 magnesium ions per subunit.</text>
</comment>
<comment type="pathway">
    <text evidence="1">Amino-acid biosynthesis; L-isoleucine biosynthesis; L-isoleucine from 2-oxobutanoate: step 2/4.</text>
</comment>
<comment type="pathway">
    <text evidence="1">Amino-acid biosynthesis; L-valine biosynthesis; L-valine from pyruvate: step 2/4.</text>
</comment>
<comment type="similarity">
    <text evidence="1">Belongs to the ketol-acid reductoisomerase family.</text>
</comment>
<protein>
    <recommendedName>
        <fullName evidence="1">Ketol-acid reductoisomerase (NADP(+))</fullName>
        <shortName evidence="1">KARI</shortName>
        <ecNumber evidence="1">1.1.1.86</ecNumber>
    </recommendedName>
    <alternativeName>
        <fullName evidence="1">Acetohydroxy-acid isomeroreductase</fullName>
        <shortName evidence="1">AHIR</shortName>
    </alternativeName>
    <alternativeName>
        <fullName evidence="1">Alpha-keto-beta-hydroxylacyl reductoisomerase</fullName>
    </alternativeName>
    <alternativeName>
        <fullName evidence="1">Ketol-acid reductoisomerase type 2</fullName>
    </alternativeName>
    <alternativeName>
        <fullName evidence="1">Ketol-acid reductoisomerase type II</fullName>
    </alternativeName>
</protein>
<evidence type="ECO:0000255" key="1">
    <source>
        <dbReference type="HAMAP-Rule" id="MF_00435"/>
    </source>
</evidence>
<evidence type="ECO:0000255" key="2">
    <source>
        <dbReference type="PROSITE-ProRule" id="PRU01197"/>
    </source>
</evidence>
<evidence type="ECO:0000255" key="3">
    <source>
        <dbReference type="PROSITE-ProRule" id="PRU01198"/>
    </source>
</evidence>
<feature type="chain" id="PRO_1000060230" description="Ketol-acid reductoisomerase (NADP(+))">
    <location>
        <begin position="1"/>
        <end position="491"/>
    </location>
</feature>
<feature type="domain" description="KARI N-terminal Rossmann" evidence="2">
    <location>
        <begin position="15"/>
        <end position="208"/>
    </location>
</feature>
<feature type="domain" description="KARI C-terminal knotted 1" evidence="3">
    <location>
        <begin position="209"/>
        <end position="344"/>
    </location>
</feature>
<feature type="domain" description="KARI C-terminal knotted 2" evidence="3">
    <location>
        <begin position="345"/>
        <end position="484"/>
    </location>
</feature>
<feature type="active site" evidence="1">
    <location>
        <position position="132"/>
    </location>
</feature>
<feature type="binding site" evidence="1">
    <location>
        <begin position="45"/>
        <end position="48"/>
    </location>
    <ligand>
        <name>NADP(+)</name>
        <dbReference type="ChEBI" id="CHEBI:58349"/>
    </ligand>
</feature>
<feature type="binding site" evidence="1">
    <location>
        <position position="68"/>
    </location>
    <ligand>
        <name>NADP(+)</name>
        <dbReference type="ChEBI" id="CHEBI:58349"/>
    </ligand>
</feature>
<feature type="binding site" evidence="1">
    <location>
        <position position="76"/>
    </location>
    <ligand>
        <name>NADP(+)</name>
        <dbReference type="ChEBI" id="CHEBI:58349"/>
    </ligand>
</feature>
<feature type="binding site" evidence="1">
    <location>
        <position position="78"/>
    </location>
    <ligand>
        <name>NADP(+)</name>
        <dbReference type="ChEBI" id="CHEBI:58349"/>
    </ligand>
</feature>
<feature type="binding site" evidence="1">
    <location>
        <begin position="108"/>
        <end position="110"/>
    </location>
    <ligand>
        <name>NADP(+)</name>
        <dbReference type="ChEBI" id="CHEBI:58349"/>
    </ligand>
</feature>
<feature type="binding site" evidence="1">
    <location>
        <position position="158"/>
    </location>
    <ligand>
        <name>NADP(+)</name>
        <dbReference type="ChEBI" id="CHEBI:58349"/>
    </ligand>
</feature>
<feature type="binding site" evidence="1">
    <location>
        <position position="217"/>
    </location>
    <ligand>
        <name>Mg(2+)</name>
        <dbReference type="ChEBI" id="CHEBI:18420"/>
        <label>1</label>
    </ligand>
</feature>
<feature type="binding site" evidence="1">
    <location>
        <position position="217"/>
    </location>
    <ligand>
        <name>Mg(2+)</name>
        <dbReference type="ChEBI" id="CHEBI:18420"/>
        <label>2</label>
    </ligand>
</feature>
<feature type="binding site" evidence="1">
    <location>
        <position position="221"/>
    </location>
    <ligand>
        <name>Mg(2+)</name>
        <dbReference type="ChEBI" id="CHEBI:18420"/>
        <label>1</label>
    </ligand>
</feature>
<feature type="binding site" evidence="1">
    <location>
        <position position="389"/>
    </location>
    <ligand>
        <name>Mg(2+)</name>
        <dbReference type="ChEBI" id="CHEBI:18420"/>
        <label>2</label>
    </ligand>
</feature>
<feature type="binding site" evidence="1">
    <location>
        <position position="393"/>
    </location>
    <ligand>
        <name>Mg(2+)</name>
        <dbReference type="ChEBI" id="CHEBI:18420"/>
        <label>2</label>
    </ligand>
</feature>
<feature type="binding site" evidence="1">
    <location>
        <position position="414"/>
    </location>
    <ligand>
        <name>substrate</name>
    </ligand>
</feature>
<reference key="1">
    <citation type="journal article" date="2010" name="PLoS Genet.">
        <title>Genome sequence of the plant growth promoting endophytic bacterium Enterobacter sp. 638.</title>
        <authorList>
            <person name="Taghavi S."/>
            <person name="van der Lelie D."/>
            <person name="Hoffman A."/>
            <person name="Zhang Y.B."/>
            <person name="Walla M.D."/>
            <person name="Vangronsveld J."/>
            <person name="Newman L."/>
            <person name="Monchy S."/>
        </authorList>
    </citation>
    <scope>NUCLEOTIDE SEQUENCE [LARGE SCALE GENOMIC DNA]</scope>
    <source>
        <strain>638</strain>
    </source>
</reference>